<comment type="function">
    <text evidence="1">Required for spatial organization of the terminus region of the chromosome (Ter macrodomain) during the cell cycle. Prevents early segregation of duplicated Ter macrodomains during cell division. Binds specifically to matS, which is a 13 bp signature motif repeated within the Ter macrodomain.</text>
</comment>
<comment type="subunit">
    <text evidence="1">Homodimer.</text>
</comment>
<comment type="subcellular location">
    <subcellularLocation>
        <location evidence="1">Cytoplasm</location>
    </subcellularLocation>
</comment>
<comment type="similarity">
    <text evidence="1">Belongs to the MatP family.</text>
</comment>
<keyword id="KW-0131">Cell cycle</keyword>
<keyword id="KW-0132">Cell division</keyword>
<keyword id="KW-0963">Cytoplasm</keyword>
<keyword id="KW-0238">DNA-binding</keyword>
<gene>
    <name evidence="1" type="primary">matP</name>
    <name type="ordered locus">SG0959</name>
</gene>
<accession>B5R6C2</accession>
<reference key="1">
    <citation type="journal article" date="2008" name="Genome Res.">
        <title>Comparative genome analysis of Salmonella enteritidis PT4 and Salmonella gallinarum 287/91 provides insights into evolutionary and host adaptation pathways.</title>
        <authorList>
            <person name="Thomson N.R."/>
            <person name="Clayton D.J."/>
            <person name="Windhorst D."/>
            <person name="Vernikos G."/>
            <person name="Davidson S."/>
            <person name="Churcher C."/>
            <person name="Quail M.A."/>
            <person name="Stevens M."/>
            <person name="Jones M.A."/>
            <person name="Watson M."/>
            <person name="Barron A."/>
            <person name="Layton A."/>
            <person name="Pickard D."/>
            <person name="Kingsley R.A."/>
            <person name="Bignell A."/>
            <person name="Clark L."/>
            <person name="Harris B."/>
            <person name="Ormond D."/>
            <person name="Abdellah Z."/>
            <person name="Brooks K."/>
            <person name="Cherevach I."/>
            <person name="Chillingworth T."/>
            <person name="Woodward J."/>
            <person name="Norberczak H."/>
            <person name="Lord A."/>
            <person name="Arrowsmith C."/>
            <person name="Jagels K."/>
            <person name="Moule S."/>
            <person name="Mungall K."/>
            <person name="Saunders M."/>
            <person name="Whitehead S."/>
            <person name="Chabalgoity J.A."/>
            <person name="Maskell D."/>
            <person name="Humphreys T."/>
            <person name="Roberts M."/>
            <person name="Barrow P.A."/>
            <person name="Dougan G."/>
            <person name="Parkhill J."/>
        </authorList>
    </citation>
    <scope>NUCLEOTIDE SEQUENCE [LARGE SCALE GENOMIC DNA]</scope>
    <source>
        <strain>287/91 / NCTC 13346</strain>
    </source>
</reference>
<dbReference type="EMBL" id="AM933173">
    <property type="protein sequence ID" value="CAR36849.1"/>
    <property type="molecule type" value="Genomic_DNA"/>
</dbReference>
<dbReference type="RefSeq" id="WP_000877172.1">
    <property type="nucleotide sequence ID" value="NC_011274.1"/>
</dbReference>
<dbReference type="SMR" id="B5R6C2"/>
<dbReference type="KEGG" id="seg:SG0959"/>
<dbReference type="HOGENOM" id="CLU_142157_0_0_6"/>
<dbReference type="Proteomes" id="UP000008321">
    <property type="component" value="Chromosome"/>
</dbReference>
<dbReference type="GO" id="GO:0005737">
    <property type="term" value="C:cytoplasm"/>
    <property type="evidence" value="ECO:0007669"/>
    <property type="project" value="UniProtKB-SubCell"/>
</dbReference>
<dbReference type="GO" id="GO:0043565">
    <property type="term" value="F:sequence-specific DNA binding"/>
    <property type="evidence" value="ECO:0007669"/>
    <property type="project" value="UniProtKB-UniRule"/>
</dbReference>
<dbReference type="GO" id="GO:0051301">
    <property type="term" value="P:cell division"/>
    <property type="evidence" value="ECO:0007669"/>
    <property type="project" value="UniProtKB-UniRule"/>
</dbReference>
<dbReference type="GO" id="GO:0006355">
    <property type="term" value="P:regulation of DNA-templated transcription"/>
    <property type="evidence" value="ECO:0007669"/>
    <property type="project" value="InterPro"/>
</dbReference>
<dbReference type="Gene3D" id="1.20.1270.380">
    <property type="entry name" value="MatP, N-terminal domain"/>
    <property type="match status" value="1"/>
</dbReference>
<dbReference type="Gene3D" id="1.10.1220.10">
    <property type="entry name" value="Met repressor-like"/>
    <property type="match status" value="1"/>
</dbReference>
<dbReference type="HAMAP" id="MF_01073">
    <property type="entry name" value="MatP"/>
    <property type="match status" value="1"/>
</dbReference>
<dbReference type="InterPro" id="IPR013321">
    <property type="entry name" value="Arc_rbn_hlx_hlx"/>
</dbReference>
<dbReference type="InterPro" id="IPR009390">
    <property type="entry name" value="MatP"/>
</dbReference>
<dbReference type="InterPro" id="IPR035375">
    <property type="entry name" value="MatP_C"/>
</dbReference>
<dbReference type="InterPro" id="IPR035087">
    <property type="entry name" value="MatP_N"/>
</dbReference>
<dbReference type="InterPro" id="IPR038339">
    <property type="entry name" value="MatP_N_sf"/>
</dbReference>
<dbReference type="NCBIfam" id="NF003471">
    <property type="entry name" value="PRK05097.1"/>
    <property type="match status" value="1"/>
</dbReference>
<dbReference type="Pfam" id="PF06303">
    <property type="entry name" value="MatP"/>
    <property type="match status" value="1"/>
</dbReference>
<dbReference type="Pfam" id="PF17414">
    <property type="entry name" value="MatP_C"/>
    <property type="match status" value="1"/>
</dbReference>
<protein>
    <recommendedName>
        <fullName evidence="1">Macrodomain Ter protein</fullName>
    </recommendedName>
</protein>
<proteinExistence type="inferred from homology"/>
<sequence length="150" mass="17801">MKYQQLENLESGWKWKYLVKKHREGELITRYVEASAAQEAVNLLLALENEPVRVNVWIDRHMNPALLNRMKQTIRARRKRHFNAEHQHTRKKSIDLEFMVWQRLAGLAQRRGKTLSETIVQLIEDAEHKEKYATQMTTLKQDLQALLGKK</sequence>
<organism>
    <name type="scientific">Salmonella gallinarum (strain 287/91 / NCTC 13346)</name>
    <dbReference type="NCBI Taxonomy" id="550538"/>
    <lineage>
        <taxon>Bacteria</taxon>
        <taxon>Pseudomonadati</taxon>
        <taxon>Pseudomonadota</taxon>
        <taxon>Gammaproteobacteria</taxon>
        <taxon>Enterobacterales</taxon>
        <taxon>Enterobacteriaceae</taxon>
        <taxon>Salmonella</taxon>
    </lineage>
</organism>
<name>MATP_SALG2</name>
<evidence type="ECO:0000255" key="1">
    <source>
        <dbReference type="HAMAP-Rule" id="MF_01073"/>
    </source>
</evidence>
<feature type="chain" id="PRO_1000136676" description="Macrodomain Ter protein">
    <location>
        <begin position="1"/>
        <end position="150"/>
    </location>
</feature>